<name>GFA_ASPOR</name>
<evidence type="ECO:0000255" key="1">
    <source>
        <dbReference type="HAMAP-Rule" id="MF_03142"/>
    </source>
</evidence>
<evidence type="ECO:0000255" key="2">
    <source>
        <dbReference type="PROSITE-ProRule" id="PRU01239"/>
    </source>
</evidence>
<evidence type="ECO:0000305" key="3"/>
<feature type="chain" id="PRO_0000406155" description="Putative glutathione-dependent formaldehyde-activating enzyme">
    <location>
        <begin position="1"/>
        <end position="191"/>
    </location>
</feature>
<feature type="domain" description="CENP-V/GFA" evidence="2">
    <location>
        <begin position="20"/>
        <end position="166"/>
    </location>
</feature>
<feature type="binding site" evidence="1 2">
    <location>
        <position position="27"/>
    </location>
    <ligand>
        <name>Zn(2+)</name>
        <dbReference type="ChEBI" id="CHEBI:29105"/>
        <label>1</label>
        <note>structural</note>
    </ligand>
</feature>
<feature type="binding site" evidence="1 2">
    <location>
        <position position="29"/>
    </location>
    <ligand>
        <name>Zn(2+)</name>
        <dbReference type="ChEBI" id="CHEBI:29105"/>
        <label>1</label>
        <note>structural</note>
    </ligand>
</feature>
<feature type="binding site" evidence="1 2">
    <location>
        <position position="48"/>
    </location>
    <ligand>
        <name>Zn(2+)</name>
        <dbReference type="ChEBI" id="CHEBI:29105"/>
        <label>2</label>
        <note>catalytic</note>
    </ligand>
</feature>
<feature type="binding site" evidence="1 2">
    <location>
        <position position="50"/>
    </location>
    <ligand>
        <name>Zn(2+)</name>
        <dbReference type="ChEBI" id="CHEBI:29105"/>
        <label>2</label>
        <note>catalytic</note>
    </ligand>
</feature>
<feature type="binding site" evidence="1 2">
    <location>
        <position position="53"/>
    </location>
    <ligand>
        <name>Zn(2+)</name>
        <dbReference type="ChEBI" id="CHEBI:29105"/>
        <label>2</label>
        <note>catalytic</note>
    </ligand>
</feature>
<feature type="binding site" evidence="1 2">
    <location>
        <position position="95"/>
    </location>
    <ligand>
        <name>Zn(2+)</name>
        <dbReference type="ChEBI" id="CHEBI:29105"/>
        <label>1</label>
        <note>structural</note>
    </ligand>
</feature>
<feature type="binding site" evidence="1 2">
    <location>
        <position position="98"/>
    </location>
    <ligand>
        <name>Zn(2+)</name>
        <dbReference type="ChEBI" id="CHEBI:29105"/>
        <label>1</label>
        <note>structural</note>
    </ligand>
</feature>
<dbReference type="EC" id="4.4.1.22" evidence="1"/>
<dbReference type="EMBL" id="BA000053">
    <property type="protein sequence ID" value="BAE62210.1"/>
    <property type="status" value="ALT_SEQ"/>
    <property type="molecule type" value="Genomic_DNA"/>
</dbReference>
<dbReference type="RefSeq" id="XP_003190311.1">
    <property type="nucleotide sequence ID" value="XM_003190263.1"/>
</dbReference>
<dbReference type="SMR" id="P0CL54"/>
<dbReference type="EnsemblFungi" id="BAE62210">
    <property type="protein sequence ID" value="BAE62210"/>
    <property type="gene ID" value="AO090701000508"/>
</dbReference>
<dbReference type="UniPathway" id="UPA00562">
    <property type="reaction ID" value="UER00621"/>
</dbReference>
<dbReference type="Proteomes" id="UP000006564">
    <property type="component" value="Chromosome 5"/>
</dbReference>
<dbReference type="GO" id="GO:0051907">
    <property type="term" value="F:S-(hydroxymethyl)glutathione synthase activity"/>
    <property type="evidence" value="ECO:0007669"/>
    <property type="project" value="UniProtKB-UniRule"/>
</dbReference>
<dbReference type="GO" id="GO:0008270">
    <property type="term" value="F:zinc ion binding"/>
    <property type="evidence" value="ECO:0007669"/>
    <property type="project" value="UniProtKB-UniRule"/>
</dbReference>
<dbReference type="GO" id="GO:0046294">
    <property type="term" value="P:formaldehyde catabolic process"/>
    <property type="evidence" value="ECO:0007669"/>
    <property type="project" value="UniProtKB-UniRule"/>
</dbReference>
<dbReference type="Gene3D" id="3.90.1590.10">
    <property type="entry name" value="glutathione-dependent formaldehyde- activating enzyme (gfa)"/>
    <property type="match status" value="1"/>
</dbReference>
<dbReference type="HAMAP" id="MF_00723">
    <property type="entry name" value="Formald_GSH"/>
    <property type="match status" value="1"/>
</dbReference>
<dbReference type="InterPro" id="IPR006913">
    <property type="entry name" value="CENP-V/GFA"/>
</dbReference>
<dbReference type="InterPro" id="IPR014185">
    <property type="entry name" value="Formald_GSH"/>
</dbReference>
<dbReference type="InterPro" id="IPR011057">
    <property type="entry name" value="Mss4-like_sf"/>
</dbReference>
<dbReference type="NCBIfam" id="TIGR02820">
    <property type="entry name" value="formald_GSH"/>
    <property type="match status" value="1"/>
</dbReference>
<dbReference type="NCBIfam" id="NF003829">
    <property type="entry name" value="PRK05417.1"/>
    <property type="match status" value="1"/>
</dbReference>
<dbReference type="PANTHER" id="PTHR33337:SF40">
    <property type="entry name" value="CENP-V_GFA DOMAIN-CONTAINING PROTEIN-RELATED"/>
    <property type="match status" value="1"/>
</dbReference>
<dbReference type="PANTHER" id="PTHR33337">
    <property type="entry name" value="GFA DOMAIN-CONTAINING PROTEIN"/>
    <property type="match status" value="1"/>
</dbReference>
<dbReference type="Pfam" id="PF04828">
    <property type="entry name" value="GFA"/>
    <property type="match status" value="1"/>
</dbReference>
<dbReference type="PIRSF" id="PIRSF033318">
    <property type="entry name" value="Formald_GSH"/>
    <property type="match status" value="1"/>
</dbReference>
<dbReference type="SUPFAM" id="SSF51316">
    <property type="entry name" value="Mss4-like"/>
    <property type="match status" value="1"/>
</dbReference>
<dbReference type="PROSITE" id="PS51891">
    <property type="entry name" value="CENP_V_GFA"/>
    <property type="match status" value="1"/>
</dbReference>
<comment type="function">
    <text evidence="1">Catalyzes the condensation of formaldehyde and glutathione to S-hydroxymethylglutathione.</text>
</comment>
<comment type="catalytic activity">
    <reaction evidence="1">
        <text>S-(hydroxymethyl)glutathione = glutathione + formaldehyde</text>
        <dbReference type="Rhea" id="RHEA:22488"/>
        <dbReference type="ChEBI" id="CHEBI:16842"/>
        <dbReference type="ChEBI" id="CHEBI:57925"/>
        <dbReference type="ChEBI" id="CHEBI:58758"/>
        <dbReference type="EC" id="4.4.1.22"/>
    </reaction>
</comment>
<comment type="cofactor">
    <cofactor evidence="1 2">
        <name>Zn(2+)</name>
        <dbReference type="ChEBI" id="CHEBI:29105"/>
    </cofactor>
    <text evidence="1 2">Binds 2 Zn(2+) ions per subunit.</text>
</comment>
<comment type="pathway">
    <text evidence="1">One-carbon metabolism; formaldehyde degradation; formate from formaldehyde (glutathione route): step 1/3.</text>
</comment>
<comment type="similarity">
    <text evidence="3">Belongs to the Gfa family.</text>
</comment>
<comment type="sequence caution" evidence="3">
    <conflict type="erroneous gene model prediction">
        <sequence resource="EMBL-CDS" id="BAE62210"/>
    </conflict>
</comment>
<accession>P0CL54</accession>
<accession>Q2U8A5</accession>
<sequence>MPVSLHPLVDNGITKGDANFPGGNLYCLCPQNKVTVAIKGNVAHNHACGCSKCWKPAGALFSVVGVVPKENLSVAANADKLEILDKAAAIQRYACKECGTHLFGRIEIDHPFKGLDFVHAELSDKKGWQEPQFAGFVSSIIEQGFHPNGMDEVRSKFQSLGLQTYDTLSPPLMDLIATYTGKKNGKLSANL</sequence>
<protein>
    <recommendedName>
        <fullName evidence="1">Putative glutathione-dependent formaldehyde-activating enzyme</fullName>
        <ecNumber evidence="1">4.4.1.22</ecNumber>
    </recommendedName>
    <alternativeName>
        <fullName evidence="1">S-(hydroxymethyl)glutathione synthase</fullName>
    </alternativeName>
</protein>
<gene>
    <name type="ORF">AO090701000508-B</name>
</gene>
<keyword id="KW-0456">Lyase</keyword>
<keyword id="KW-0479">Metal-binding</keyword>
<keyword id="KW-1185">Reference proteome</keyword>
<keyword id="KW-0862">Zinc</keyword>
<reference key="1">
    <citation type="journal article" date="2005" name="Nature">
        <title>Genome sequencing and analysis of Aspergillus oryzae.</title>
        <authorList>
            <person name="Machida M."/>
            <person name="Asai K."/>
            <person name="Sano M."/>
            <person name="Tanaka T."/>
            <person name="Kumagai T."/>
            <person name="Terai G."/>
            <person name="Kusumoto K."/>
            <person name="Arima T."/>
            <person name="Akita O."/>
            <person name="Kashiwagi Y."/>
            <person name="Abe K."/>
            <person name="Gomi K."/>
            <person name="Horiuchi H."/>
            <person name="Kitamoto K."/>
            <person name="Kobayashi T."/>
            <person name="Takeuchi M."/>
            <person name="Denning D.W."/>
            <person name="Galagan J.E."/>
            <person name="Nierman W.C."/>
            <person name="Yu J."/>
            <person name="Archer D.B."/>
            <person name="Bennett J.W."/>
            <person name="Bhatnagar D."/>
            <person name="Cleveland T.E."/>
            <person name="Fedorova N.D."/>
            <person name="Gotoh O."/>
            <person name="Horikawa H."/>
            <person name="Hosoyama A."/>
            <person name="Ichinomiya M."/>
            <person name="Igarashi R."/>
            <person name="Iwashita K."/>
            <person name="Juvvadi P.R."/>
            <person name="Kato M."/>
            <person name="Kato Y."/>
            <person name="Kin T."/>
            <person name="Kokubun A."/>
            <person name="Maeda H."/>
            <person name="Maeyama N."/>
            <person name="Maruyama J."/>
            <person name="Nagasaki H."/>
            <person name="Nakajima T."/>
            <person name="Oda K."/>
            <person name="Okada K."/>
            <person name="Paulsen I."/>
            <person name="Sakamoto K."/>
            <person name="Sawano T."/>
            <person name="Takahashi M."/>
            <person name="Takase K."/>
            <person name="Terabayashi Y."/>
            <person name="Wortman J.R."/>
            <person name="Yamada O."/>
            <person name="Yamagata Y."/>
            <person name="Anazawa H."/>
            <person name="Hata Y."/>
            <person name="Koide Y."/>
            <person name="Komori T."/>
            <person name="Koyama Y."/>
            <person name="Minetoki T."/>
            <person name="Suharnan S."/>
            <person name="Tanaka A."/>
            <person name="Isono K."/>
            <person name="Kuhara S."/>
            <person name="Ogasawara N."/>
            <person name="Kikuchi H."/>
        </authorList>
    </citation>
    <scope>NUCLEOTIDE SEQUENCE [LARGE SCALE GENOMIC DNA]</scope>
    <source>
        <strain>ATCC 42149 / RIB 40</strain>
    </source>
</reference>
<organism>
    <name type="scientific">Aspergillus oryzae (strain ATCC 42149 / RIB 40)</name>
    <name type="common">Yellow koji mold</name>
    <dbReference type="NCBI Taxonomy" id="510516"/>
    <lineage>
        <taxon>Eukaryota</taxon>
        <taxon>Fungi</taxon>
        <taxon>Dikarya</taxon>
        <taxon>Ascomycota</taxon>
        <taxon>Pezizomycotina</taxon>
        <taxon>Eurotiomycetes</taxon>
        <taxon>Eurotiomycetidae</taxon>
        <taxon>Eurotiales</taxon>
        <taxon>Aspergillaceae</taxon>
        <taxon>Aspergillus</taxon>
        <taxon>Aspergillus subgen. Circumdati</taxon>
    </lineage>
</organism>
<proteinExistence type="inferred from homology"/>